<accession>P11188</accession>
<accession>B3VMQ0</accession>
<proteinExistence type="inferred from homology"/>
<dbReference type="EMBL" id="M14782">
    <property type="protein sequence ID" value="AAA32287.1"/>
    <property type="molecule type" value="Genomic_DNA"/>
</dbReference>
<dbReference type="EMBL" id="X04962">
    <property type="protein sequence ID" value="CAA28631.1"/>
    <property type="molecule type" value="Genomic_DNA"/>
</dbReference>
<dbReference type="EMBL" id="EU771092">
    <property type="protein sequence ID" value="ACE96037.1"/>
    <property type="molecule type" value="Genomic_DNA"/>
</dbReference>
<dbReference type="PIR" id="A24721">
    <property type="entry name" value="WMBP29"/>
</dbReference>
<dbReference type="RefSeq" id="YP_002004543.1">
    <molecule id="P11188-1"/>
    <property type="nucleotide sequence ID" value="NC_011048.1"/>
</dbReference>
<dbReference type="SMR" id="P11188"/>
<dbReference type="TCDB" id="1.E.10.1.1">
    <property type="family name" value="the bacillus subtilis Phi29 holin (Phi29 holin) family"/>
</dbReference>
<dbReference type="GeneID" id="6446519"/>
<dbReference type="KEGG" id="vg:6446519"/>
<dbReference type="Proteomes" id="UP000001207">
    <property type="component" value="Genome"/>
</dbReference>
<dbReference type="GO" id="GO:0020002">
    <property type="term" value="C:host cell plasma membrane"/>
    <property type="evidence" value="ECO:0007669"/>
    <property type="project" value="UniProtKB-SubCell"/>
</dbReference>
<dbReference type="GO" id="GO:0016020">
    <property type="term" value="C:membrane"/>
    <property type="evidence" value="ECO:0007669"/>
    <property type="project" value="UniProtKB-KW"/>
</dbReference>
<dbReference type="GO" id="GO:0044659">
    <property type="term" value="P:viral release from host cell by cytolysis"/>
    <property type="evidence" value="ECO:0000314"/>
    <property type="project" value="UniProtKB"/>
</dbReference>
<dbReference type="InterPro" id="IPR006480">
    <property type="entry name" value="Phage_holin_4_1"/>
</dbReference>
<dbReference type="NCBIfam" id="TIGR01593">
    <property type="entry name" value="holin_tox_secr"/>
    <property type="match status" value="1"/>
</dbReference>
<dbReference type="Pfam" id="PF05105">
    <property type="entry name" value="Phage_holin_4_1"/>
    <property type="match status" value="1"/>
</dbReference>
<name>HOLIN_BPPH2</name>
<keyword id="KW-0024">Alternative initiation</keyword>
<keyword id="KW-0204">Cytolysis</keyword>
<keyword id="KW-1030">Host cell inner membrane</keyword>
<keyword id="KW-0578">Host cell lysis by virus</keyword>
<keyword id="KW-1032">Host cell membrane</keyword>
<keyword id="KW-1043">Host membrane</keyword>
<keyword id="KW-0426">Late protein</keyword>
<keyword id="KW-0472">Membrane</keyword>
<keyword id="KW-1185">Reference proteome</keyword>
<keyword id="KW-0812">Transmembrane</keyword>
<keyword id="KW-1133">Transmembrane helix</keyword>
<keyword id="KW-1188">Viral release from host cell</keyword>
<gene>
    <name type="primary">14</name>
</gene>
<organismHost>
    <name type="scientific">Bacillus subtilis</name>
    <dbReference type="NCBI Taxonomy" id="1423"/>
</organismHost>
<protein>
    <recommendedName>
        <fullName evidence="4">Antiholin</fullName>
    </recommendedName>
    <alternativeName>
        <fullName>Gene product 14</fullName>
        <shortName>gp14</shortName>
    </alternativeName>
    <alternativeName>
        <fullName evidence="4">Lysis inhibitor 14-131</fullName>
    </alternativeName>
    <alternativeName>
        <fullName>Protein p14</fullName>
    </alternativeName>
    <domain>
        <recommendedName>
            <fullName evidence="4">Holin</fullName>
        </recommendedName>
        <alternativeName>
            <fullName evidence="4">Lysis protein 14-129</fullName>
        </alternativeName>
    </domain>
</protein>
<organism>
    <name type="scientific">Bacillus phage phi29</name>
    <name type="common">Bacteriophage phi-29</name>
    <dbReference type="NCBI Taxonomy" id="2884424"/>
    <lineage>
        <taxon>Viruses</taxon>
        <taxon>Duplodnaviria</taxon>
        <taxon>Heunggongvirae</taxon>
        <taxon>Uroviricota</taxon>
        <taxon>Caudoviricetes</taxon>
        <taxon>Salasmaviridae</taxon>
        <taxon>Picovirinae</taxon>
        <taxon>Salasvirus</taxon>
        <taxon>Salasvirus phi29</taxon>
    </lineage>
</organism>
<reference key="1">
    <citation type="journal article" date="1986" name="Gene">
        <title>Nucleotide sequence of the late region of Bacillus phage phi 29 completes the 19,285-bp sequence of phi 29 genome. Comparison with the homologous sequence of phage PZA.</title>
        <authorList>
            <person name="Vlcek C."/>
            <person name="Paces V."/>
        </authorList>
    </citation>
    <scope>NUCLEOTIDE SEQUENCE [GENOMIC DNA]</scope>
</reference>
<reference key="2">
    <citation type="journal article" date="1986" name="Nucleic Acids Res.">
        <title>Nucleotide sequence of Bacillus phage phi 29 genes 14 and 15: homology of gene 15 with other phage lysozymes.</title>
        <authorList>
            <person name="Garvey K.J."/>
            <person name="Saedi M.S."/>
            <person name="Ito J."/>
        </authorList>
    </citation>
    <scope>NUCLEOTIDE SEQUENCE [GENOMIC DNA]</scope>
</reference>
<reference key="3">
    <citation type="submission" date="2008-05" db="EMBL/GenBank/DDBJ databases">
        <authorList>
            <person name="Villegas A.P."/>
            <person name="Lingohr E.J."/>
            <person name="Ceyssens P.-J."/>
            <person name="Kropinski A.M."/>
        </authorList>
    </citation>
    <scope>NUCLEOTIDE SEQUENCE [GENOMIC DNA]</scope>
</reference>
<reference key="4">
    <citation type="journal article" date="1993" name="J. Bacteriol.">
        <title>The missing link in phage lysis of gram-positive bacteria: gene 14 of Bacillus subtilis phage phi 29 encodes the functional homolog of lambda S protein.</title>
        <authorList>
            <person name="Steiner M."/>
            <person name="Lubitz W."/>
            <person name="Blaesi U."/>
        </authorList>
    </citation>
    <scope>FUNCTION (ISOFORM HOLIN)</scope>
</reference>
<reference key="5">
    <citation type="journal article" date="1995" name="Virology">
        <title>Dual translational start motif evolutionarily conserved in the holin gene of Bacillus subtilis phage phi 29.</title>
        <authorList>
            <person name="Tedin K."/>
            <person name="Resch A."/>
            <person name="Steiner M."/>
            <person name="Blaesi U."/>
        </authorList>
    </citation>
    <scope>ALTERNATIVE INITIATION</scope>
</reference>
<reference key="6">
    <citation type="journal article" date="1996" name="Mol. Microbiol.">
        <title>Two beginnings for a single purpose: the dual-start holins in the regulation of phage lysis.</title>
        <authorList>
            <person name="Blasi U."/>
            <person name="Young R."/>
        </authorList>
    </citation>
    <scope>REVIEW</scope>
</reference>
<feature type="chain" id="PRO_0000106598" description="Antiholin">
    <location>
        <begin position="1"/>
        <end position="131"/>
    </location>
</feature>
<feature type="topological domain" description="Cytoplasmic" evidence="1">
    <location>
        <begin position="1"/>
        <end position="52"/>
    </location>
</feature>
<feature type="transmembrane region" description="Helical" evidence="2">
    <location>
        <begin position="53"/>
        <end position="75"/>
    </location>
</feature>
<feature type="topological domain" description="Periplasmic" evidence="1">
    <location>
        <begin position="76"/>
        <end position="78"/>
    </location>
</feature>
<feature type="transmembrane region" description="Helical" evidence="2">
    <location>
        <begin position="79"/>
        <end position="101"/>
    </location>
</feature>
<feature type="topological domain" description="Cytoplasmic" evidence="1">
    <location>
        <begin position="102"/>
        <end position="131"/>
    </location>
</feature>
<feature type="splice variant" id="VSP_058249" description="In isoform Holin." evidence="3">
    <location>
        <begin position="1"/>
        <end position="2"/>
    </location>
</feature>
<feature type="sequence conflict" description="In Ref. 1; AAA32287." evidence="5" ref="1">
    <original>PAGL</original>
    <variation>LRVY</variation>
    <location>
        <begin position="78"/>
        <end position="81"/>
    </location>
</feature>
<feature type="topological domain" description="Periplasmic" evidence="1">
    <location sequence="P11188-2">
        <begin position="1"/>
        <end position="14"/>
    </location>
</feature>
<feature type="transmembrane region" description="Helical" evidence="1">
    <location sequence="P11188-2">
        <begin position="15"/>
        <end position="37"/>
    </location>
</feature>
<feature type="topological domain" description="Cytoplasmic" evidence="1">
    <location sequence="P11188-2">
        <begin position="38"/>
        <end position="49"/>
    </location>
</feature>
<comment type="function">
    <molecule>Isoform Holin</molecule>
    <text evidence="1 6">Accumulates harmlessly in the cytoplasmic membrane until it reaches a critical concentration that triggers the formation of micron-scale pores (holes) causing host cell membrane disruption and endolysin escape into the periplasmic space (Probable). Determines the precise timing of host cell lysis (By similarity). Participates with the endolysin and spanin proteins in the sequential events which lead to the programmed host cell lysis releasing the mature viral particles from the host cell (By similarity).</text>
</comment>
<comment type="function">
    <molecule>Isoform Antiholin</molecule>
    <text evidence="1">Counteracts the aggregation of the holin molecules and thus of pore formation.</text>
</comment>
<comment type="subunit">
    <molecule>Isoform Holin</molecule>
    <text evidence="1">Homomultimer. Interacts with isoform Antiholin; this interaction blocks the holin homomultimerization and delays host cell lysis.</text>
</comment>
<comment type="subcellular location">
    <subcellularLocation>
        <location evidence="1">Host cell inner membrane</location>
        <topology evidence="1">Multi-pass membrane protein</topology>
    </subcellularLocation>
    <text evidence="5">Classified as a class I holin.</text>
</comment>
<comment type="alternative products">
    <event type="alternative initiation"/>
    <isoform>
        <id>P11188-1</id>
        <name evidence="3">Antiholin</name>
        <sequence type="displayed"/>
    </isoform>
    <isoform>
        <id>P11188-2</id>
        <name evidence="3">Holin</name>
        <sequence type="described" ref="VSP_058249"/>
    </isoform>
</comment>
<comment type="domain">
    <text evidence="1">Isoform Holin has 3 transmembrane regions whereas isoform Antiholin lacks the first transmembrane region.</text>
</comment>
<comment type="domain">
    <text evidence="1">The C-terminus acts as a cytoplasmic regulatory region.</text>
</comment>
<comment type="similarity">
    <text evidence="5">Belongs to the bacteriophage holin family. phi29likevirus holin subfamily.</text>
</comment>
<evidence type="ECO:0000250" key="1">
    <source>
        <dbReference type="UniProtKB" id="P03705"/>
    </source>
</evidence>
<evidence type="ECO:0000255" key="2"/>
<evidence type="ECO:0000269" key="3">
    <source>
    </source>
</evidence>
<evidence type="ECO:0000303" key="4">
    <source>
    </source>
</evidence>
<evidence type="ECO:0000305" key="5"/>
<evidence type="ECO:0000305" key="6">
    <source>
    </source>
</evidence>
<sequence>MKMIAWMQHFLETDETKLIYWLTFLMVCMVVDTVLGVLFAKLNPNIKFSSFKIKTGVLIKVSEMILALLAIPFAVPFPAGLPLLYTVYTALCVSEIYSIFGHLRLVDDKSDFLEILENFFKRTSGKNKEEK</sequence>